<reference key="1">
    <citation type="journal article" date="2008" name="DNA Res.">
        <title>Complete genome sequence and comparative analysis of the wild-type commensal Escherichia coli strain SE11 isolated from a healthy adult.</title>
        <authorList>
            <person name="Oshima K."/>
            <person name="Toh H."/>
            <person name="Ogura Y."/>
            <person name="Sasamoto H."/>
            <person name="Morita H."/>
            <person name="Park S.-H."/>
            <person name="Ooka T."/>
            <person name="Iyoda S."/>
            <person name="Taylor T.D."/>
            <person name="Hayashi T."/>
            <person name="Itoh K."/>
            <person name="Hattori M."/>
        </authorList>
    </citation>
    <scope>NUCLEOTIDE SEQUENCE [LARGE SCALE GENOMIC DNA]</scope>
    <source>
        <strain>SE11</strain>
    </source>
</reference>
<protein>
    <recommendedName>
        <fullName evidence="2">Small ribosomal subunit protein uS12</fullName>
    </recommendedName>
    <alternativeName>
        <fullName evidence="3">30S ribosomal protein S12</fullName>
    </alternativeName>
</protein>
<sequence>MATVNQLVRKPRARKVAKSNVPALEACPQKRGVCTRVYTTTPKKPNSALRKVCRVRLTNGFEVTSYIGGEGHNLQEHSVILIRGGRVKDLPGVRYHTVRGALDCSGVKDRKQARSKYGVKRPKA</sequence>
<feature type="chain" id="PRO_1000194161" description="Small ribosomal subunit protein uS12">
    <location>
        <begin position="1"/>
        <end position="124"/>
    </location>
</feature>
<feature type="modified residue" description="3-methylthioaspartic acid" evidence="1">
    <location>
        <position position="89"/>
    </location>
</feature>
<feature type="modified residue" description="N6-acetyllysine" evidence="2">
    <location>
        <position position="108"/>
    </location>
</feature>
<gene>
    <name evidence="2" type="primary">rpsL</name>
    <name type="ordered locus">ECSE_3603</name>
</gene>
<comment type="function">
    <text evidence="2">With S4 and S5 plays an important role in translational accuracy.</text>
</comment>
<comment type="function">
    <text evidence="2">Interacts with and stabilizes bases of the 16S rRNA that are involved in tRNA selection in the A site and with the mRNA backbone. Located at the interface of the 30S and 50S subunits, it traverses the body of the 30S subunit contacting proteins on the other side and probably holding the rRNA structure together. The combined cluster of proteins S8, S12 and S17 appears to hold together the shoulder and platform of the 30S subunit.</text>
</comment>
<comment type="subunit">
    <text evidence="2">Part of the 30S ribosomal subunit. Contacts proteins S8 and S17. May interact with IF1 in the 30S initiation complex.</text>
</comment>
<comment type="similarity">
    <text evidence="2">Belongs to the universal ribosomal protein uS12 family.</text>
</comment>
<name>RS12_ECOSE</name>
<keyword id="KW-0007">Acetylation</keyword>
<keyword id="KW-0488">Methylation</keyword>
<keyword id="KW-0687">Ribonucleoprotein</keyword>
<keyword id="KW-0689">Ribosomal protein</keyword>
<keyword id="KW-0694">RNA-binding</keyword>
<keyword id="KW-0699">rRNA-binding</keyword>
<keyword id="KW-0820">tRNA-binding</keyword>
<evidence type="ECO:0000250" key="1"/>
<evidence type="ECO:0000255" key="2">
    <source>
        <dbReference type="HAMAP-Rule" id="MF_00403"/>
    </source>
</evidence>
<evidence type="ECO:0000305" key="3"/>
<dbReference type="EMBL" id="AP009240">
    <property type="protein sequence ID" value="BAG79127.1"/>
    <property type="molecule type" value="Genomic_DNA"/>
</dbReference>
<dbReference type="RefSeq" id="WP_000246815.1">
    <property type="nucleotide sequence ID" value="NC_011415.1"/>
</dbReference>
<dbReference type="SMR" id="B6I242"/>
<dbReference type="GeneID" id="98390450"/>
<dbReference type="KEGG" id="ecy:ECSE_3603"/>
<dbReference type="HOGENOM" id="CLU_104295_1_2_6"/>
<dbReference type="Proteomes" id="UP000008199">
    <property type="component" value="Chromosome"/>
</dbReference>
<dbReference type="GO" id="GO:0015935">
    <property type="term" value="C:small ribosomal subunit"/>
    <property type="evidence" value="ECO:0007669"/>
    <property type="project" value="InterPro"/>
</dbReference>
<dbReference type="GO" id="GO:0019843">
    <property type="term" value="F:rRNA binding"/>
    <property type="evidence" value="ECO:0007669"/>
    <property type="project" value="UniProtKB-UniRule"/>
</dbReference>
<dbReference type="GO" id="GO:0003735">
    <property type="term" value="F:structural constituent of ribosome"/>
    <property type="evidence" value="ECO:0007669"/>
    <property type="project" value="InterPro"/>
</dbReference>
<dbReference type="GO" id="GO:0000049">
    <property type="term" value="F:tRNA binding"/>
    <property type="evidence" value="ECO:0007669"/>
    <property type="project" value="UniProtKB-UniRule"/>
</dbReference>
<dbReference type="GO" id="GO:0006412">
    <property type="term" value="P:translation"/>
    <property type="evidence" value="ECO:0007669"/>
    <property type="project" value="UniProtKB-UniRule"/>
</dbReference>
<dbReference type="CDD" id="cd03368">
    <property type="entry name" value="Ribosomal_S12"/>
    <property type="match status" value="1"/>
</dbReference>
<dbReference type="FunFam" id="2.40.50.140:FF:000001">
    <property type="entry name" value="30S ribosomal protein S12"/>
    <property type="match status" value="1"/>
</dbReference>
<dbReference type="Gene3D" id="2.40.50.140">
    <property type="entry name" value="Nucleic acid-binding proteins"/>
    <property type="match status" value="1"/>
</dbReference>
<dbReference type="HAMAP" id="MF_00403_B">
    <property type="entry name" value="Ribosomal_uS12_B"/>
    <property type="match status" value="1"/>
</dbReference>
<dbReference type="InterPro" id="IPR012340">
    <property type="entry name" value="NA-bd_OB-fold"/>
</dbReference>
<dbReference type="InterPro" id="IPR006032">
    <property type="entry name" value="Ribosomal_uS12"/>
</dbReference>
<dbReference type="InterPro" id="IPR005679">
    <property type="entry name" value="Ribosomal_uS12_bac"/>
</dbReference>
<dbReference type="NCBIfam" id="TIGR00981">
    <property type="entry name" value="rpsL_bact"/>
    <property type="match status" value="1"/>
</dbReference>
<dbReference type="PANTHER" id="PTHR11652">
    <property type="entry name" value="30S RIBOSOMAL PROTEIN S12 FAMILY MEMBER"/>
    <property type="match status" value="1"/>
</dbReference>
<dbReference type="Pfam" id="PF00164">
    <property type="entry name" value="Ribosom_S12_S23"/>
    <property type="match status" value="1"/>
</dbReference>
<dbReference type="PIRSF" id="PIRSF002133">
    <property type="entry name" value="Ribosomal_S12/S23"/>
    <property type="match status" value="1"/>
</dbReference>
<dbReference type="PRINTS" id="PR01034">
    <property type="entry name" value="RIBOSOMALS12"/>
</dbReference>
<dbReference type="SUPFAM" id="SSF50249">
    <property type="entry name" value="Nucleic acid-binding proteins"/>
    <property type="match status" value="1"/>
</dbReference>
<dbReference type="PROSITE" id="PS00055">
    <property type="entry name" value="RIBOSOMAL_S12"/>
    <property type="match status" value="1"/>
</dbReference>
<accession>B6I242</accession>
<proteinExistence type="inferred from homology"/>
<organism>
    <name type="scientific">Escherichia coli (strain SE11)</name>
    <dbReference type="NCBI Taxonomy" id="409438"/>
    <lineage>
        <taxon>Bacteria</taxon>
        <taxon>Pseudomonadati</taxon>
        <taxon>Pseudomonadota</taxon>
        <taxon>Gammaproteobacteria</taxon>
        <taxon>Enterobacterales</taxon>
        <taxon>Enterobacteriaceae</taxon>
        <taxon>Escherichia</taxon>
    </lineage>
</organism>